<name>SLA6_MACLB</name>
<protein>
    <recommendedName>
        <fullName>Snaclec A6</fullName>
    </recommendedName>
    <alternativeName>
        <fullName>C-type lectin A6</fullName>
    </alternativeName>
</protein>
<feature type="signal peptide" evidence="1">
    <location>
        <begin position="1"/>
        <end position="23"/>
    </location>
</feature>
<feature type="chain" id="PRO_0000356322" description="Snaclec A6">
    <location>
        <begin position="24"/>
        <end position="156"/>
    </location>
</feature>
<feature type="domain" description="C-type lectin" evidence="2">
    <location>
        <begin position="34"/>
        <end position="155"/>
    </location>
</feature>
<feature type="disulfide bond" evidence="2">
    <location>
        <begin position="27"/>
        <end position="38"/>
    </location>
</feature>
<feature type="disulfide bond" evidence="2">
    <location>
        <begin position="55"/>
        <end position="154"/>
    </location>
</feature>
<feature type="disulfide bond" description="Interchain" evidence="2">
    <location>
        <position position="106"/>
    </location>
</feature>
<feature type="disulfide bond" evidence="2">
    <location>
        <begin position="129"/>
        <end position="146"/>
    </location>
</feature>
<dbReference type="EMBL" id="EU085458">
    <property type="protein sequence ID" value="ABW82668.1"/>
    <property type="molecule type" value="mRNA"/>
</dbReference>
<dbReference type="SMR" id="B4XSZ6"/>
<dbReference type="GO" id="GO:0005576">
    <property type="term" value="C:extracellular region"/>
    <property type="evidence" value="ECO:0007669"/>
    <property type="project" value="UniProtKB-SubCell"/>
</dbReference>
<dbReference type="GO" id="GO:0090729">
    <property type="term" value="F:toxin activity"/>
    <property type="evidence" value="ECO:0007669"/>
    <property type="project" value="UniProtKB-KW"/>
</dbReference>
<dbReference type="FunFam" id="3.10.100.10:FF:000087">
    <property type="entry name" value="Snaclec rhodocetin subunit delta"/>
    <property type="match status" value="1"/>
</dbReference>
<dbReference type="Gene3D" id="3.10.100.10">
    <property type="entry name" value="Mannose-Binding Protein A, subunit A"/>
    <property type="match status" value="1"/>
</dbReference>
<dbReference type="InterPro" id="IPR001304">
    <property type="entry name" value="C-type_lectin-like"/>
</dbReference>
<dbReference type="InterPro" id="IPR016186">
    <property type="entry name" value="C-type_lectin-like/link_sf"/>
</dbReference>
<dbReference type="InterPro" id="IPR050111">
    <property type="entry name" value="C-type_lectin/snaclec_domain"/>
</dbReference>
<dbReference type="InterPro" id="IPR018378">
    <property type="entry name" value="C-type_lectin_CS"/>
</dbReference>
<dbReference type="InterPro" id="IPR016187">
    <property type="entry name" value="CTDL_fold"/>
</dbReference>
<dbReference type="PANTHER" id="PTHR22803">
    <property type="entry name" value="MANNOSE, PHOSPHOLIPASE, LECTIN RECEPTOR RELATED"/>
    <property type="match status" value="1"/>
</dbReference>
<dbReference type="Pfam" id="PF00059">
    <property type="entry name" value="Lectin_C"/>
    <property type="match status" value="1"/>
</dbReference>
<dbReference type="SMART" id="SM00034">
    <property type="entry name" value="CLECT"/>
    <property type="match status" value="1"/>
</dbReference>
<dbReference type="SUPFAM" id="SSF56436">
    <property type="entry name" value="C-type lectin-like"/>
    <property type="match status" value="1"/>
</dbReference>
<dbReference type="PROSITE" id="PS00615">
    <property type="entry name" value="C_TYPE_LECTIN_1"/>
    <property type="match status" value="1"/>
</dbReference>
<dbReference type="PROSITE" id="PS50041">
    <property type="entry name" value="C_TYPE_LECTIN_2"/>
    <property type="match status" value="1"/>
</dbReference>
<sequence length="156" mass="17823">MGRSISVSFGLLVVFLSLSGTGADQDCLPGWSSHEGHCYKVFNLDKTWEDAEKFCTEQGNSGHLVSIDSKKETNFVAELVSPNIKETRRTDFVWIGLRAEDKRQHCSSEWSDGSSINYQNWIEAESKKCLGLEKQTRYRKWVNLNCGKPYRFTCEI</sequence>
<proteinExistence type="evidence at transcript level"/>
<accession>B4XSZ6</accession>
<comment type="function">
    <text evidence="1">Interferes with one step of hemostasis (modulation of platelet aggregation, or coagulation cascade, for example).</text>
</comment>
<comment type="subunit">
    <text evidence="1">Heterodimer; disulfide-linked.</text>
</comment>
<comment type="subcellular location">
    <subcellularLocation>
        <location evidence="1">Secreted</location>
    </subcellularLocation>
</comment>
<comment type="tissue specificity">
    <text>Expressed by the venom gland.</text>
</comment>
<comment type="miscellaneous">
    <text>Shows greater sequence similarity to the alpha than beta subunits compared to other heterodimer snaclecs.</text>
</comment>
<comment type="similarity">
    <text evidence="3">Belongs to the snaclec family.</text>
</comment>
<evidence type="ECO:0000250" key="1"/>
<evidence type="ECO:0000255" key="2">
    <source>
        <dbReference type="PROSITE-ProRule" id="PRU00040"/>
    </source>
</evidence>
<evidence type="ECO:0000305" key="3"/>
<keyword id="KW-1015">Disulfide bond</keyword>
<keyword id="KW-1199">Hemostasis impairing toxin</keyword>
<keyword id="KW-0964">Secreted</keyword>
<keyword id="KW-0732">Signal</keyword>
<keyword id="KW-0800">Toxin</keyword>
<organism>
    <name type="scientific">Macrovipera lebetinus</name>
    <name type="common">Levantine viper</name>
    <name type="synonym">Vipera lebetina</name>
    <dbReference type="NCBI Taxonomy" id="3148341"/>
    <lineage>
        <taxon>Eukaryota</taxon>
        <taxon>Metazoa</taxon>
        <taxon>Chordata</taxon>
        <taxon>Craniata</taxon>
        <taxon>Vertebrata</taxon>
        <taxon>Euteleostomi</taxon>
        <taxon>Lepidosauria</taxon>
        <taxon>Squamata</taxon>
        <taxon>Bifurcata</taxon>
        <taxon>Unidentata</taxon>
        <taxon>Episquamata</taxon>
        <taxon>Toxicofera</taxon>
        <taxon>Serpentes</taxon>
        <taxon>Colubroidea</taxon>
        <taxon>Viperidae</taxon>
        <taxon>Viperinae</taxon>
        <taxon>Macrovipera</taxon>
    </lineage>
</organism>
<reference key="1">
    <citation type="journal article" date="2009" name="Toxicon">
        <title>C-type lectin protein isoforms of Macrovipera lebetina: cDNA cloning and genetic diversity.</title>
        <authorList>
            <person name="Jebali J."/>
            <person name="Bazaa A."/>
            <person name="Sarray S."/>
            <person name="Benhaj K."/>
            <person name="Karboul A."/>
            <person name="El Ayeb M."/>
            <person name="Marrakchi N."/>
            <person name="Gargouri A."/>
        </authorList>
    </citation>
    <scope>NUCLEOTIDE SEQUENCE [MRNA]</scope>
</reference>